<proteinExistence type="inferred from homology"/>
<organism>
    <name type="scientific">Clostridium kluyveri (strain ATCC 8527 / DSM 555 / NBRC 12016 / NCIMB 10680 / K1)</name>
    <dbReference type="NCBI Taxonomy" id="431943"/>
    <lineage>
        <taxon>Bacteria</taxon>
        <taxon>Bacillati</taxon>
        <taxon>Bacillota</taxon>
        <taxon>Clostridia</taxon>
        <taxon>Eubacteriales</taxon>
        <taxon>Clostridiaceae</taxon>
        <taxon>Clostridium</taxon>
    </lineage>
</organism>
<name>MINE_CLOK5</name>
<protein>
    <recommendedName>
        <fullName evidence="1">Cell division topological specificity factor</fullName>
    </recommendedName>
</protein>
<feature type="chain" id="PRO_1000078634" description="Cell division topological specificity factor">
    <location>
        <begin position="1"/>
        <end position="88"/>
    </location>
</feature>
<keyword id="KW-0131">Cell cycle</keyword>
<keyword id="KW-0132">Cell division</keyword>
<keyword id="KW-1185">Reference proteome</keyword>
<sequence>MDLFRAFSKPSSKDIAKERLRLILINDRCSMPQEVLEDIKEDILKVLSKYMEINYAEIDVRMTITEKVEEDPVALVANIPVKKVKYNK</sequence>
<comment type="function">
    <text evidence="1">Prevents the cell division inhibition by proteins MinC and MinD at internal division sites while permitting inhibition at polar sites. This ensures cell division at the proper site by restricting the formation of a division septum at the midpoint of the long axis of the cell.</text>
</comment>
<comment type="similarity">
    <text evidence="1">Belongs to the MinE family.</text>
</comment>
<dbReference type="EMBL" id="CP000673">
    <property type="protein sequence ID" value="EDK32923.1"/>
    <property type="molecule type" value="Genomic_DNA"/>
</dbReference>
<dbReference type="RefSeq" id="WP_012101250.1">
    <property type="nucleotide sequence ID" value="NC_009706.1"/>
</dbReference>
<dbReference type="STRING" id="431943.CKL_0872"/>
<dbReference type="KEGG" id="ckl:CKL_0872"/>
<dbReference type="eggNOG" id="COG0851">
    <property type="taxonomic scope" value="Bacteria"/>
</dbReference>
<dbReference type="HOGENOM" id="CLU_137929_1_1_9"/>
<dbReference type="Proteomes" id="UP000002411">
    <property type="component" value="Chromosome"/>
</dbReference>
<dbReference type="GO" id="GO:0051301">
    <property type="term" value="P:cell division"/>
    <property type="evidence" value="ECO:0007669"/>
    <property type="project" value="UniProtKB-KW"/>
</dbReference>
<dbReference type="GO" id="GO:0032955">
    <property type="term" value="P:regulation of division septum assembly"/>
    <property type="evidence" value="ECO:0007669"/>
    <property type="project" value="InterPro"/>
</dbReference>
<dbReference type="Gene3D" id="3.30.1070.10">
    <property type="entry name" value="Cell division topological specificity factor MinE"/>
    <property type="match status" value="1"/>
</dbReference>
<dbReference type="HAMAP" id="MF_00262">
    <property type="entry name" value="MinE"/>
    <property type="match status" value="1"/>
</dbReference>
<dbReference type="InterPro" id="IPR005527">
    <property type="entry name" value="MinE"/>
</dbReference>
<dbReference type="InterPro" id="IPR036707">
    <property type="entry name" value="MinE_sf"/>
</dbReference>
<dbReference type="NCBIfam" id="TIGR01215">
    <property type="entry name" value="minE"/>
    <property type="match status" value="1"/>
</dbReference>
<dbReference type="Pfam" id="PF03776">
    <property type="entry name" value="MinE"/>
    <property type="match status" value="1"/>
</dbReference>
<dbReference type="SUPFAM" id="SSF55229">
    <property type="entry name" value="Cell division protein MinE topological specificity domain"/>
    <property type="match status" value="1"/>
</dbReference>
<evidence type="ECO:0000255" key="1">
    <source>
        <dbReference type="HAMAP-Rule" id="MF_00262"/>
    </source>
</evidence>
<reference key="1">
    <citation type="journal article" date="2008" name="Proc. Natl. Acad. Sci. U.S.A.">
        <title>The genome of Clostridium kluyveri, a strict anaerobe with unique metabolic features.</title>
        <authorList>
            <person name="Seedorf H."/>
            <person name="Fricke W.F."/>
            <person name="Veith B."/>
            <person name="Brueggemann H."/>
            <person name="Liesegang H."/>
            <person name="Strittmatter A."/>
            <person name="Miethke M."/>
            <person name="Buckel W."/>
            <person name="Hinderberger J."/>
            <person name="Li F."/>
            <person name="Hagemeier C."/>
            <person name="Thauer R.K."/>
            <person name="Gottschalk G."/>
        </authorList>
    </citation>
    <scope>NUCLEOTIDE SEQUENCE [LARGE SCALE GENOMIC DNA]</scope>
    <source>
        <strain>ATCC 8527 / DSM 555 / NBRC 12016 / NCIMB 10680 / K1</strain>
    </source>
</reference>
<accession>A5N6J2</accession>
<gene>
    <name evidence="1" type="primary">minE</name>
    <name type="ordered locus">CKL_0872</name>
</gene>